<keyword id="KW-0010">Activator</keyword>
<keyword id="KW-0014">AIDS</keyword>
<keyword id="KW-0131">Cell cycle</keyword>
<keyword id="KW-1079">Host G2/M cell cycle arrest by virus</keyword>
<keyword id="KW-1048">Host nucleus</keyword>
<keyword id="KW-0945">Host-virus interaction</keyword>
<keyword id="KW-1121">Modulation of host cell cycle by virus</keyword>
<keyword id="KW-0597">Phosphoprotein</keyword>
<keyword id="KW-0804">Transcription</keyword>
<keyword id="KW-0805">Transcription regulation</keyword>
<keyword id="KW-1163">Viral penetration into host nucleus</keyword>
<keyword id="KW-0946">Virion</keyword>
<keyword id="KW-1160">Virus entry into host cell</keyword>
<organismHost>
    <name type="scientific">Homo sapiens</name>
    <name type="common">Human</name>
    <dbReference type="NCBI Taxonomy" id="9606"/>
</organismHost>
<gene>
    <name type="primary">vpr</name>
</gene>
<evidence type="ECO:0000250" key="1"/>
<evidence type="ECO:0000256" key="2">
    <source>
        <dbReference type="SAM" id="MobiDB-lite"/>
    </source>
</evidence>
<reference key="1">
    <citation type="journal article" date="1989" name="Proc. Natl. Acad. Sci. U.S.A.">
        <title>Molecular and biological characterization of a replication competent human immunodeficiency type 2 (HIV-2) proviral clone.</title>
        <authorList>
            <person name="Franchini G."/>
            <person name="Fargnoli K.A."/>
            <person name="Giombini F."/>
            <person name="Jagodzinski L.L."/>
            <person name="de Rossi A."/>
            <person name="Bosch M."/>
            <person name="Biberfeld G."/>
            <person name="Fenyo A.M."/>
            <person name="Albert J."/>
            <person name="Gallo R.C."/>
            <person name="Wong-Staal F."/>
        </authorList>
    </citation>
    <scope>NUCLEOTIDE SEQUENCE [GENOMIC DNA]</scope>
</reference>
<feature type="chain" id="PRO_0000085461" description="Protein Vpr">
    <location>
        <begin position="1"/>
        <end position="105"/>
    </location>
</feature>
<feature type="region of interest" description="Disordered" evidence="2">
    <location>
        <begin position="1"/>
        <end position="20"/>
    </location>
</feature>
<feature type="region of interest" description="Disordered" evidence="2">
    <location>
        <begin position="83"/>
        <end position="105"/>
    </location>
</feature>
<feature type="modified residue" description="Phosphoserine; by host" evidence="1">
    <location>
        <position position="84"/>
    </location>
</feature>
<comment type="function">
    <text evidence="1">Stimulates gene expression driven by the HIV-2 LTR. Prevents infected cells from undergoing mitosis and proliferating, by inducing arrest or delay in the G2 phase of the cell cycle. Cell cycle arrest creates a favorable environment for maximizing viral expression and production (By similarity).</text>
</comment>
<comment type="subunit">
    <text evidence="1">Interacts with human UNG.</text>
</comment>
<comment type="subcellular location">
    <subcellularLocation>
        <location>Virion</location>
    </subcellularLocation>
    <subcellularLocation>
        <location evidence="1">Host nucleus</location>
    </subcellularLocation>
</comment>
<dbReference type="EMBL" id="J04498">
    <property type="protein sequence ID" value="AAB00749.1"/>
    <property type="molecule type" value="Genomic_DNA"/>
</dbReference>
<dbReference type="SMR" id="P12455"/>
<dbReference type="Proteomes" id="UP000007427">
    <property type="component" value="Segment"/>
</dbReference>
<dbReference type="GO" id="GO:0043657">
    <property type="term" value="C:host cell"/>
    <property type="evidence" value="ECO:0007669"/>
    <property type="project" value="GOC"/>
</dbReference>
<dbReference type="GO" id="GO:0042025">
    <property type="term" value="C:host cell nucleus"/>
    <property type="evidence" value="ECO:0007669"/>
    <property type="project" value="UniProtKB-SubCell"/>
</dbReference>
<dbReference type="GO" id="GO:0044423">
    <property type="term" value="C:virion component"/>
    <property type="evidence" value="ECO:0007669"/>
    <property type="project" value="UniProtKB-KW"/>
</dbReference>
<dbReference type="GO" id="GO:0046718">
    <property type="term" value="P:symbiont entry into host cell"/>
    <property type="evidence" value="ECO:0007669"/>
    <property type="project" value="UniProtKB-KW"/>
</dbReference>
<dbReference type="GO" id="GO:0039592">
    <property type="term" value="P:symbiont-mediated arrest of host cell cycle during G2/M transition"/>
    <property type="evidence" value="ECO:0007669"/>
    <property type="project" value="UniProtKB-KW"/>
</dbReference>
<dbReference type="GO" id="GO:0075732">
    <property type="term" value="P:viral penetration into host nucleus"/>
    <property type="evidence" value="ECO:0007669"/>
    <property type="project" value="UniProtKB-KW"/>
</dbReference>
<dbReference type="Gene3D" id="6.10.210.10">
    <property type="match status" value="1"/>
</dbReference>
<dbReference type="Gene3D" id="1.20.5.90">
    <property type="entry name" value="VpR/VpX protein, C-terminal domain"/>
    <property type="match status" value="1"/>
</dbReference>
<dbReference type="InterPro" id="IPR000012">
    <property type="entry name" value="RetroV_VpR/X"/>
</dbReference>
<dbReference type="Pfam" id="PF00522">
    <property type="entry name" value="VPR"/>
    <property type="match status" value="1"/>
</dbReference>
<dbReference type="PRINTS" id="PR00444">
    <property type="entry name" value="HIVVPRVPX"/>
</dbReference>
<protein>
    <recommendedName>
        <fullName>Protein Vpr</fullName>
    </recommendedName>
    <alternativeName>
        <fullName>R ORF protein</fullName>
    </alternativeName>
    <alternativeName>
        <fullName>Viral protein R</fullName>
    </alternativeName>
</protein>
<accession>P12455</accession>
<name>VPR_HV2SB</name>
<sequence length="105" mass="11975">MTEAPAEFPPEDGTPPREPGDEWVIEILREIKEEALKHFDPRLLTALGYYIYTRHGDTLEGARELIRVLQRALFTHFRAGCGHSRIGQPRGRNPLSAIPTPRNMQ</sequence>
<proteinExistence type="inferred from homology"/>
<organism>
    <name type="scientific">Human immunodeficiency virus type 2 subtype A (isolate SBLISY)</name>
    <name type="common">HIV-2</name>
    <dbReference type="NCBI Taxonomy" id="11718"/>
    <lineage>
        <taxon>Viruses</taxon>
        <taxon>Riboviria</taxon>
        <taxon>Pararnavirae</taxon>
        <taxon>Artverviricota</taxon>
        <taxon>Revtraviricetes</taxon>
        <taxon>Ortervirales</taxon>
        <taxon>Retroviridae</taxon>
        <taxon>Orthoretrovirinae</taxon>
        <taxon>Lentivirus</taxon>
        <taxon>Human immunodeficiency virus 2</taxon>
    </lineage>
</organism>